<evidence type="ECO:0000250" key="1"/>
<evidence type="ECO:0000255" key="2">
    <source>
        <dbReference type="PROSITE-ProRule" id="PRU10135"/>
    </source>
</evidence>
<evidence type="ECO:0000269" key="3">
    <source>
    </source>
</evidence>
<evidence type="ECO:0000269" key="4">
    <source>
    </source>
</evidence>
<evidence type="ECO:0000269" key="5">
    <source>
    </source>
</evidence>
<evidence type="ECO:0000303" key="6">
    <source>
    </source>
</evidence>
<evidence type="ECO:0000305" key="7"/>
<evidence type="ECO:0007744" key="8">
    <source>
        <dbReference type="PDB" id="6IMJ"/>
    </source>
</evidence>
<evidence type="ECO:0007744" key="9">
    <source>
        <dbReference type="PDB" id="6IMK"/>
    </source>
</evidence>
<evidence type="ECO:0007744" key="10">
    <source>
        <dbReference type="PDB" id="6IML"/>
    </source>
</evidence>
<evidence type="ECO:0007744" key="11">
    <source>
        <dbReference type="PDB" id="6IMN"/>
    </source>
</evidence>
<evidence type="ECO:0007829" key="12">
    <source>
        <dbReference type="PDB" id="6IMJ"/>
    </source>
</evidence>
<evidence type="ECO:0007829" key="13">
    <source>
        <dbReference type="PDB" id="6IMK"/>
    </source>
</evidence>
<evidence type="ECO:0007829" key="14">
    <source>
        <dbReference type="PDB" id="6IML"/>
    </source>
</evidence>
<organismHost>
    <name type="scientific">Ornithodoros</name>
    <name type="common">relapsing fever ticks</name>
    <dbReference type="NCBI Taxonomy" id="6937"/>
</organismHost>
<organismHost>
    <name type="scientific">Sus scrofa</name>
    <name type="common">Pig</name>
    <dbReference type="NCBI Taxonomy" id="9823"/>
</organismHost>
<keyword id="KW-0002">3D-structure</keyword>
<keyword id="KW-0067">ATP-binding</keyword>
<keyword id="KW-0131">Cell cycle</keyword>
<keyword id="KW-0132">Cell division</keyword>
<keyword id="KW-0227">DNA damage</keyword>
<keyword id="KW-0233">DNA recombination</keyword>
<keyword id="KW-0234">DNA repair</keyword>
<keyword id="KW-0235">DNA replication</keyword>
<keyword id="KW-0436">Ligase</keyword>
<keyword id="KW-0479">Metal-binding</keyword>
<keyword id="KW-0547">Nucleotide-binding</keyword>
<keyword id="KW-1185">Reference proteome</keyword>
<keyword id="KW-0946">Virion</keyword>
<sequence length="419" mass="48164">MLNQFPGQYSNNIFCFPPIESETKSGKKASWIICVQVVQHNTIIPITDEMFSTDVKDAVAEIFTKFFVEEGAVRISKMTRVTEGKNLGKKNATTVVHQAFKDALSKYNRHARQKRGAHTNRGMIPPMLVKYFNIIPKTFFEEETDPIVQRKRNGVRAVACQQGDGCILLYSRTEKEFLGLDNIKKELKQLYLFIDVRVYLDGELYLHRKPLQWIAGQANAKTDSSELHFYVFDCFWSDQLQMPSNKRQQLLTNIFKQKEDLTFIHQVENFSVKNVDEALRLKAQFIKEGYEGAIVRNANGPYEPGYNNYHSAHLAKLKPLLDAEFILVDYTQGKKGKDLGAILWVCELPNKKRFVVTPKHLTYADRYALFQKLTPALFKKHLYGKELTVEYAELSPKTGIPLQARAVGFREPINVLEII</sequence>
<proteinExistence type="evidence at protein level"/>
<organism>
    <name type="scientific">African swine fever virus (strain Badajoz 1971 Vero-adapted)</name>
    <name type="common">Ba71V</name>
    <name type="synonym">ASFV</name>
    <dbReference type="NCBI Taxonomy" id="10498"/>
    <lineage>
        <taxon>Viruses</taxon>
        <taxon>Varidnaviria</taxon>
        <taxon>Bamfordvirae</taxon>
        <taxon>Nucleocytoviricota</taxon>
        <taxon>Pokkesviricetes</taxon>
        <taxon>Asfuvirales</taxon>
        <taxon>Asfarviridae</taxon>
        <taxon>Asfivirus</taxon>
        <taxon>African swine fever virus</taxon>
    </lineage>
</organism>
<comment type="function">
    <text evidence="3">Very low-fidelity DNA ligase that seals nicks in double-stranded DNA during DNA repair (PubMed:15938630). Together with the viral repair DNA polymerase X, fills the single nucleotide gaps generated by the AP endonuclease (PubMed:15938630). It is not essential for viral replication and recombination (PubMed:15938630). Displays a very low adenylation activity towards DNA with 3'-dideoxy- or 3'-amino-terminated nicks compared to regular nick DNA (PubMed:15938630).</text>
</comment>
<comment type="catalytic activity">
    <reaction evidence="2 3">
        <text>ATP + (deoxyribonucleotide)n-3'-hydroxyl + 5'-phospho-(deoxyribonucleotide)m = (deoxyribonucleotide)n+m + AMP + diphosphate.</text>
        <dbReference type="EC" id="6.5.1.1"/>
    </reaction>
</comment>
<comment type="cofactor">
    <cofactor evidence="1">
        <name>a divalent metal cation</name>
        <dbReference type="ChEBI" id="CHEBI:60240"/>
    </cofactor>
</comment>
<comment type="subcellular location">
    <subcellularLocation>
        <location evidence="4">Virion</location>
    </subcellularLocation>
    <text evidence="4">Found in association with the viral nucleoid.</text>
</comment>
<comment type="domain">
    <text evidence="5">The N-terminus domain (NTD) plays a critical role in DNA-binding, catalytic complex assembly and catalysis.</text>
</comment>
<comment type="miscellaneous">
    <text>Consistent with its intracellular location, ASFV encodes its own replicative DNA polymerase and three base excision repair enzymes: a class II AP endonuclease, the repair polymerase Pol X, and an ATP-dependent DNA ligase.</text>
</comment>
<comment type="similarity">
    <text evidence="7">Belongs to the ATP-dependent DNA ligase family.</text>
</comment>
<feature type="chain" id="PRO_0000059592" description="DNA ligase">
    <location>
        <begin position="1"/>
        <end position="419"/>
    </location>
</feature>
<feature type="region of interest" description="NTD" evidence="5">
    <location>
        <begin position="1"/>
        <end position="120"/>
    </location>
</feature>
<feature type="region of interest" description="AD domain" evidence="5">
    <location>
        <begin position="121"/>
        <end position="317"/>
    </location>
</feature>
<feature type="region of interest" description="OB domain" evidence="5">
    <location>
        <begin position="318"/>
        <end position="419"/>
    </location>
</feature>
<feature type="active site" description="N6-AMP-lysine intermediate" evidence="2">
    <location>
        <position position="151"/>
    </location>
</feature>
<feature type="binding site" evidence="5">
    <location>
        <position position="149"/>
    </location>
    <ligand>
        <name>ATP</name>
        <dbReference type="ChEBI" id="CHEBI:30616"/>
    </ligand>
</feature>
<feature type="binding site" evidence="5">
    <location>
        <position position="151"/>
    </location>
    <ligand>
        <name>ATP</name>
        <dbReference type="ChEBI" id="CHEBI:30616"/>
    </ligand>
</feature>
<feature type="binding site" evidence="1">
    <location>
        <position position="203"/>
    </location>
    <ligand>
        <name>a divalent metal cation</name>
        <dbReference type="ChEBI" id="CHEBI:60240"/>
        <label>1</label>
    </ligand>
</feature>
<feature type="binding site" evidence="5">
    <location>
        <position position="203"/>
    </location>
    <ligand>
        <name>ATP</name>
        <dbReference type="ChEBI" id="CHEBI:30616"/>
    </ligand>
</feature>
<feature type="binding site" evidence="5">
    <location>
        <position position="232"/>
    </location>
    <ligand>
        <name>ATP</name>
        <dbReference type="ChEBI" id="CHEBI:30616"/>
    </ligand>
</feature>
<feature type="binding site" evidence="1">
    <location>
        <position position="291"/>
    </location>
    <ligand>
        <name>a divalent metal cation</name>
        <dbReference type="ChEBI" id="CHEBI:60240"/>
        <label>2</label>
    </ligand>
</feature>
<feature type="binding site" evidence="5">
    <location>
        <position position="294"/>
    </location>
    <ligand>
        <name>ATP</name>
        <dbReference type="ChEBI" id="CHEBI:30616"/>
    </ligand>
</feature>
<feature type="binding site" evidence="5">
    <location>
        <position position="316"/>
    </location>
    <ligand>
        <name>ATP</name>
        <dbReference type="ChEBI" id="CHEBI:30616"/>
    </ligand>
</feature>
<feature type="site" description="Important for the catalytic efficiency" evidence="5">
    <location>
        <position position="153"/>
    </location>
</feature>
<feature type="site" description="Important for the catalytic efficiency" evidence="5">
    <location>
        <position position="211"/>
    </location>
</feature>
<feature type="site" description="Important for the catalytic efficiency" evidence="5">
    <location>
        <position position="402"/>
    </location>
</feature>
<feature type="site" description="Important for the catalytic efficiency" evidence="5">
    <location>
        <position position="403"/>
    </location>
</feature>
<feature type="helix" evidence="14">
    <location>
        <begin position="2"/>
        <end position="4"/>
    </location>
</feature>
<feature type="strand" evidence="14">
    <location>
        <begin position="5"/>
        <end position="10"/>
    </location>
</feature>
<feature type="strand" evidence="14">
    <location>
        <begin position="13"/>
        <end position="15"/>
    </location>
</feature>
<feature type="strand" evidence="14">
    <location>
        <begin position="19"/>
        <end position="22"/>
    </location>
</feature>
<feature type="strand" evidence="14">
    <location>
        <begin position="28"/>
        <end position="44"/>
    </location>
</feature>
<feature type="helix" evidence="14">
    <location>
        <begin position="48"/>
        <end position="51"/>
    </location>
</feature>
<feature type="strand" evidence="14">
    <location>
        <begin position="59"/>
        <end position="68"/>
    </location>
</feature>
<feature type="strand" evidence="14">
    <location>
        <begin position="73"/>
        <end position="75"/>
    </location>
</feature>
<feature type="strand" evidence="14">
    <location>
        <begin position="79"/>
        <end position="81"/>
    </location>
</feature>
<feature type="helix" evidence="14">
    <location>
        <begin position="95"/>
        <end position="113"/>
    </location>
</feature>
<feature type="strand" evidence="14">
    <location>
        <begin position="129"/>
        <end position="133"/>
    </location>
</feature>
<feature type="helix" evidence="14">
    <location>
        <begin position="137"/>
        <end position="139"/>
    </location>
</feature>
<feature type="strand" evidence="14">
    <location>
        <begin position="141"/>
        <end position="144"/>
    </location>
</feature>
<feature type="strand" evidence="14">
    <location>
        <begin position="147"/>
        <end position="151"/>
    </location>
</feature>
<feature type="strand" evidence="14">
    <location>
        <begin position="154"/>
        <end position="161"/>
    </location>
</feature>
<feature type="strand" evidence="14">
    <location>
        <begin position="163"/>
        <end position="165"/>
    </location>
</feature>
<feature type="strand" evidence="14">
    <location>
        <begin position="167"/>
        <end position="170"/>
    </location>
</feature>
<feature type="helix" evidence="14">
    <location>
        <begin position="181"/>
        <end position="190"/>
    </location>
</feature>
<feature type="turn" evidence="14">
    <location>
        <begin position="191"/>
        <end position="193"/>
    </location>
</feature>
<feature type="strand" evidence="14">
    <location>
        <begin position="199"/>
        <end position="205"/>
    </location>
</feature>
<feature type="helix" evidence="14">
    <location>
        <begin position="211"/>
        <end position="219"/>
    </location>
</feature>
<feature type="strand" evidence="13">
    <location>
        <begin position="220"/>
        <end position="222"/>
    </location>
</feature>
<feature type="strand" evidence="14">
    <location>
        <begin position="228"/>
        <end position="235"/>
    </location>
</feature>
<feature type="turn" evidence="14">
    <location>
        <begin position="238"/>
        <end position="241"/>
    </location>
</feature>
<feature type="helix" evidence="14">
    <location>
        <begin position="244"/>
        <end position="255"/>
    </location>
</feature>
<feature type="strand" evidence="14">
    <location>
        <begin position="262"/>
        <end position="266"/>
    </location>
</feature>
<feature type="helix" evidence="14">
    <location>
        <begin position="275"/>
        <end position="287"/>
    </location>
</feature>
<feature type="strand" evidence="14">
    <location>
        <begin position="292"/>
        <end position="296"/>
    </location>
</feature>
<feature type="helix" evidence="14">
    <location>
        <begin position="306"/>
        <end position="308"/>
    </location>
</feature>
<feature type="strand" evidence="14">
    <location>
        <begin position="311"/>
        <end position="317"/>
    </location>
</feature>
<feature type="strand" evidence="14">
    <location>
        <begin position="321"/>
        <end position="333"/>
    </location>
</feature>
<feature type="helix" evidence="14">
    <location>
        <begin position="336"/>
        <end position="338"/>
    </location>
</feature>
<feature type="strand" evidence="14">
    <location>
        <begin position="342"/>
        <end position="347"/>
    </location>
</feature>
<feature type="strand" evidence="14">
    <location>
        <begin position="353"/>
        <end position="356"/>
    </location>
</feature>
<feature type="strand" evidence="14">
    <location>
        <begin position="358"/>
        <end position="360"/>
    </location>
</feature>
<feature type="helix" evidence="14">
    <location>
        <begin position="363"/>
        <end position="372"/>
    </location>
</feature>
<feature type="helix" evidence="14">
    <location>
        <begin position="375"/>
        <end position="381"/>
    </location>
</feature>
<feature type="turn" evidence="14">
    <location>
        <begin position="382"/>
        <end position="384"/>
    </location>
</feature>
<feature type="strand" evidence="14">
    <location>
        <begin position="386"/>
        <end position="394"/>
    </location>
</feature>
<feature type="turn" evidence="14">
    <location>
        <begin position="396"/>
        <end position="398"/>
    </location>
</feature>
<feature type="strand" evidence="14">
    <location>
        <begin position="401"/>
        <end position="403"/>
    </location>
</feature>
<feature type="strand" evidence="14">
    <location>
        <begin position="405"/>
        <end position="408"/>
    </location>
</feature>
<feature type="helix" evidence="12">
    <location>
        <begin position="415"/>
        <end position="417"/>
    </location>
</feature>
<accession>P35970</accession>
<dbReference type="EC" id="6.5.1.1" evidence="2"/>
<dbReference type="EMBL" id="X65373">
    <property type="protein sequence ID" value="CAA46445.1"/>
    <property type="molecule type" value="Genomic_DNA"/>
</dbReference>
<dbReference type="EMBL" id="U18466">
    <property type="protein sequence ID" value="AAA65329.1"/>
    <property type="molecule type" value="Genomic_DNA"/>
</dbReference>
<dbReference type="PIR" id="A45397">
    <property type="entry name" value="A45397"/>
</dbReference>
<dbReference type="RefSeq" id="NP_042793.1">
    <property type="nucleotide sequence ID" value="NC_001659.2"/>
</dbReference>
<dbReference type="PDB" id="6IMJ">
    <property type="method" value="X-ray"/>
    <property type="resolution" value="2.55 A"/>
    <property type="chains" value="A/B=1-419"/>
</dbReference>
<dbReference type="PDB" id="6IMK">
    <property type="method" value="X-ray"/>
    <property type="resolution" value="2.50 A"/>
    <property type="chains" value="A=1-419"/>
</dbReference>
<dbReference type="PDB" id="6IML">
    <property type="method" value="X-ray"/>
    <property type="resolution" value="2.35 A"/>
    <property type="chains" value="A=1-419"/>
</dbReference>
<dbReference type="PDB" id="6IMN">
    <property type="method" value="X-ray"/>
    <property type="resolution" value="2.70 A"/>
    <property type="chains" value="A/B=1-419"/>
</dbReference>
<dbReference type="PDBsum" id="6IMJ"/>
<dbReference type="PDBsum" id="6IMK"/>
<dbReference type="PDBsum" id="6IML"/>
<dbReference type="PDBsum" id="6IMN"/>
<dbReference type="SMR" id="P35970"/>
<dbReference type="GeneID" id="22220329"/>
<dbReference type="KEGG" id="vg:22220329"/>
<dbReference type="Proteomes" id="UP000000624">
    <property type="component" value="Segment"/>
</dbReference>
<dbReference type="GO" id="GO:0044423">
    <property type="term" value="C:virion component"/>
    <property type="evidence" value="ECO:0007669"/>
    <property type="project" value="UniProtKB-KW"/>
</dbReference>
<dbReference type="GO" id="GO:0005524">
    <property type="term" value="F:ATP binding"/>
    <property type="evidence" value="ECO:0007669"/>
    <property type="project" value="UniProtKB-KW"/>
</dbReference>
<dbReference type="GO" id="GO:0003910">
    <property type="term" value="F:DNA ligase (ATP) activity"/>
    <property type="evidence" value="ECO:0007669"/>
    <property type="project" value="UniProtKB-EC"/>
</dbReference>
<dbReference type="GO" id="GO:0046872">
    <property type="term" value="F:metal ion binding"/>
    <property type="evidence" value="ECO:0007669"/>
    <property type="project" value="UniProtKB-KW"/>
</dbReference>
<dbReference type="GO" id="GO:0051301">
    <property type="term" value="P:cell division"/>
    <property type="evidence" value="ECO:0007669"/>
    <property type="project" value="UniProtKB-KW"/>
</dbReference>
<dbReference type="GO" id="GO:0006310">
    <property type="term" value="P:DNA recombination"/>
    <property type="evidence" value="ECO:0007669"/>
    <property type="project" value="UniProtKB-KW"/>
</dbReference>
<dbReference type="GO" id="GO:0006281">
    <property type="term" value="P:DNA repair"/>
    <property type="evidence" value="ECO:0007669"/>
    <property type="project" value="UniProtKB-KW"/>
</dbReference>
<dbReference type="GO" id="GO:0006260">
    <property type="term" value="P:DNA replication"/>
    <property type="evidence" value="ECO:0007669"/>
    <property type="project" value="UniProtKB-KW"/>
</dbReference>
<dbReference type="Gene3D" id="3.30.470.30">
    <property type="entry name" value="DNA ligase/mRNA capping enzyme"/>
    <property type="match status" value="1"/>
</dbReference>
<dbReference type="InterPro" id="IPR012310">
    <property type="entry name" value="DNA_ligase_ATP-dep_cent"/>
</dbReference>
<dbReference type="InterPro" id="IPR016059">
    <property type="entry name" value="DNA_ligase_ATP-dep_CS"/>
</dbReference>
<dbReference type="InterPro" id="IPR012340">
    <property type="entry name" value="NA-bd_OB-fold"/>
</dbReference>
<dbReference type="InterPro" id="IPR050326">
    <property type="entry name" value="NAD_dep_DNA_ligaseB"/>
</dbReference>
<dbReference type="PANTHER" id="PTHR47810">
    <property type="entry name" value="DNA LIGASE"/>
    <property type="match status" value="1"/>
</dbReference>
<dbReference type="PANTHER" id="PTHR47810:SF5">
    <property type="entry name" value="LIGASE, PUTATIVE-RELATED"/>
    <property type="match status" value="1"/>
</dbReference>
<dbReference type="Pfam" id="PF01068">
    <property type="entry name" value="DNA_ligase_A_M"/>
    <property type="match status" value="1"/>
</dbReference>
<dbReference type="SUPFAM" id="SSF56091">
    <property type="entry name" value="DNA ligase/mRNA capping enzyme, catalytic domain"/>
    <property type="match status" value="1"/>
</dbReference>
<dbReference type="SUPFAM" id="SSF50249">
    <property type="entry name" value="Nucleic acid-binding proteins"/>
    <property type="match status" value="1"/>
</dbReference>
<dbReference type="PROSITE" id="PS00697">
    <property type="entry name" value="DNA_LIGASE_A1"/>
    <property type="match status" value="1"/>
</dbReference>
<dbReference type="PROSITE" id="PS00333">
    <property type="entry name" value="DNA_LIGASE_A2"/>
    <property type="match status" value="1"/>
</dbReference>
<dbReference type="PROSITE" id="PS50160">
    <property type="entry name" value="DNA_LIGASE_A3"/>
    <property type="match status" value="1"/>
</dbReference>
<protein>
    <recommendedName>
        <fullName evidence="6">DNA ligase</fullName>
        <ecNumber evidence="2">6.5.1.1</ecNumber>
    </recommendedName>
    <alternativeName>
        <fullName>Polydeoxyribonucleotide synthase [ATP]</fullName>
    </alternativeName>
</protein>
<name>DNLI_ASFB7</name>
<gene>
    <name type="primary">LIG</name>
    <name type="ordered locus">Ba71V-100</name>
    <name type="ORF">NP419L</name>
</gene>
<reference key="1">
    <citation type="journal article" date="1993" name="Virology">
        <title>African swine fever virus encodes a DNA ligase.</title>
        <authorList>
            <person name="Yanez R.J."/>
            <person name="Vinuela E."/>
        </authorList>
    </citation>
    <scope>NUCLEOTIDE SEQUENCE [GENOMIC DNA]</scope>
</reference>
<reference key="2">
    <citation type="journal article" date="1995" name="Virology">
        <title>Analysis of the complete nucleotide sequence of African swine fever virus.</title>
        <authorList>
            <person name="Yanez R.J."/>
            <person name="Rodriguez J.M."/>
            <person name="Nogal M.L."/>
            <person name="Yuste L."/>
            <person name="Enriquez C."/>
            <person name="Rodriguez J.F."/>
            <person name="Vinuela E."/>
        </authorList>
    </citation>
    <scope>NUCLEOTIDE SEQUENCE [LARGE SCALE GENOMIC DNA]</scope>
</reference>
<reference key="3">
    <citation type="journal article" date="2005" name="Biochemistry">
        <title>An error-prone viral DNA ligase.</title>
        <authorList>
            <person name="Lamarche B.J."/>
            <person name="Showalter A.K."/>
            <person name="Tsai M.-D."/>
        </authorList>
    </citation>
    <scope>FUNCTION</scope>
    <scope>CATALYTIC ACTIVITY</scope>
</reference>
<reference key="4">
    <citation type="journal article" date="2018" name="J. Virol.">
        <title>A Proteomic Atlas of the African Swine Fever Virus Particle.</title>
        <authorList>
            <person name="Alejo A."/>
            <person name="Matamoros T."/>
            <person name="Guerra M."/>
            <person name="Andres G."/>
        </authorList>
    </citation>
    <scope>SUBCELLULAR LOCATION</scope>
</reference>
<reference evidence="8 9 10 11" key="5">
    <citation type="journal article" date="2019" name="Nat. Commun.">
        <title>Structure of the error-prone DNA ligase of African swine fever virus identifies critical active site residues.</title>
        <authorList>
            <person name="Chen Y."/>
            <person name="Liu H."/>
            <person name="Yang C."/>
            <person name="Gao Y."/>
            <person name="Yu X."/>
            <person name="Chen X."/>
            <person name="Cui R."/>
            <person name="Zheng L."/>
            <person name="Li S."/>
            <person name="Li X."/>
            <person name="Ma J."/>
            <person name="Huang Z."/>
            <person name="Li J."/>
            <person name="Gan J."/>
        </authorList>
    </citation>
    <scope>X-RAY CRYSTALLOGRAPHY (2.35 ANGSTROMS)</scope>
    <scope>DOMAIN</scope>
    <scope>DNA-BINDING</scope>
</reference>